<dbReference type="EMBL" id="M80324">
    <property type="protein sequence ID" value="AAA23132.1"/>
    <property type="molecule type" value="Genomic_DNA"/>
</dbReference>
<dbReference type="PIR" id="JH0658">
    <property type="entry name" value="JH0658"/>
</dbReference>
<dbReference type="RefSeq" id="WP_014946261.1">
    <property type="nucleotide sequence ID" value="NZ_JALPMD010000012.1"/>
</dbReference>
<dbReference type="SMR" id="Q46204"/>
<dbReference type="STRING" id="331636.G5O_0921"/>
<dbReference type="eggNOG" id="ENOG50336U3">
    <property type="taxonomic scope" value="Bacteria"/>
</dbReference>
<dbReference type="GO" id="GO:0003677">
    <property type="term" value="F:DNA binding"/>
    <property type="evidence" value="ECO:0007669"/>
    <property type="project" value="UniProtKB-KW"/>
</dbReference>
<dbReference type="GO" id="GO:0030527">
    <property type="term" value="F:structural constituent of chromatin"/>
    <property type="evidence" value="ECO:0007669"/>
    <property type="project" value="InterPro"/>
</dbReference>
<dbReference type="InterPro" id="IPR010886">
    <property type="entry name" value="Hc1"/>
</dbReference>
<dbReference type="Pfam" id="PF07432">
    <property type="entry name" value="Hc1"/>
    <property type="match status" value="1"/>
</dbReference>
<name>HCT1_CHLPS</name>
<protein>
    <recommendedName>
        <fullName>Histone H1-like protein HC1</fullName>
    </recommendedName>
</protein>
<accession>Q46204</accession>
<proteinExistence type="evidence at transcript level"/>
<organism>
    <name type="scientific">Chlamydia psittaci</name>
    <name type="common">Chlamydophila psittaci</name>
    <dbReference type="NCBI Taxonomy" id="83554"/>
    <lineage>
        <taxon>Bacteria</taxon>
        <taxon>Pseudomonadati</taxon>
        <taxon>Chlamydiota</taxon>
        <taxon>Chlamydiia</taxon>
        <taxon>Chlamydiales</taxon>
        <taxon>Chlamydiaceae</taxon>
        <taxon>Chlamydia/Chlamydophila group</taxon>
        <taxon>Chlamydia</taxon>
    </lineage>
</organism>
<gene>
    <name type="primary">hctA</name>
</gene>
<sequence>MALKDTAKKMRDLLESIQRDLDKAERGNKAAAQRVRTDSIKLEKVAKVYRKESIKAEKSGLMTRKPATKAKKAAATKKAAPKPKIQAKAAPKAKATTKKTPAKAKAKKSSKSRYLRK</sequence>
<keyword id="KW-0238">DNA-binding</keyword>
<keyword id="KW-0677">Repeat</keyword>
<reference key="1">
    <citation type="journal article" date="1992" name="Gene">
        <title>Interspecies structural diversity among chlamydial genes encoding histone H1.</title>
        <authorList>
            <person name="Kaul R."/>
            <person name="Tao S."/>
            <person name="Wenman W.M."/>
        </authorList>
    </citation>
    <scope>NUCLEOTIDE SEQUENCE [GENOMIC DNA]</scope>
    <source>
        <strain>MN</strain>
    </source>
</reference>
<comment type="function">
    <text>Might have a role analogous to that of eukaryotic histone proteins.</text>
</comment>
<comment type="developmental stage">
    <text>Specific to the EB (elementary body) form in the life cycle of chlamydiae.</text>
</comment>
<comment type="similarity">
    <text evidence="2">Belongs to the histone H1/H5 family. HCT subfamily.</text>
</comment>
<evidence type="ECO:0000256" key="1">
    <source>
        <dbReference type="SAM" id="MobiDB-lite"/>
    </source>
</evidence>
<evidence type="ECO:0000305" key="2"/>
<feature type="chain" id="PRO_0000196018" description="Histone H1-like protein HC1">
    <location>
        <begin position="1"/>
        <end position="117"/>
    </location>
</feature>
<feature type="region of interest" description="Disordered" evidence="1">
    <location>
        <begin position="57"/>
        <end position="117"/>
    </location>
</feature>
<feature type="compositionally biased region" description="Basic residues" evidence="1">
    <location>
        <begin position="66"/>
        <end position="81"/>
    </location>
</feature>
<feature type="compositionally biased region" description="Low complexity" evidence="1">
    <location>
        <begin position="82"/>
        <end position="94"/>
    </location>
</feature>
<feature type="compositionally biased region" description="Basic residues" evidence="1">
    <location>
        <begin position="95"/>
        <end position="117"/>
    </location>
</feature>